<feature type="chain" id="PRO_0000445040" description="Meiotic recombination protein DMC1 homolog A">
    <location>
        <begin position="1"/>
        <end position="344"/>
    </location>
</feature>
<feature type="binding site" evidence="2">
    <location>
        <begin position="133"/>
        <end position="140"/>
    </location>
    <ligand>
        <name>ATP</name>
        <dbReference type="ChEBI" id="CHEBI:30616"/>
    </ligand>
</feature>
<feature type="binding site" evidence="1">
    <location>
        <position position="235"/>
    </location>
    <ligand>
        <name>dsDNA</name>
        <dbReference type="ChEBI" id="CHEBI:4705"/>
    </ligand>
</feature>
<feature type="binding site" evidence="1">
    <location>
        <position position="235"/>
    </location>
    <ligand>
        <name>ssDNA</name>
        <dbReference type="ChEBI" id="CHEBI:9160"/>
    </ligand>
</feature>
<feature type="binding site" evidence="1">
    <location>
        <position position="238"/>
    </location>
    <ligand>
        <name>ssDNA</name>
        <dbReference type="ChEBI" id="CHEBI:9160"/>
    </ligand>
</feature>
<feature type="binding site" evidence="1">
    <location>
        <position position="241"/>
    </location>
    <ligand>
        <name>dsDNA</name>
        <dbReference type="ChEBI" id="CHEBI:4705"/>
    </ligand>
</feature>
<feature type="binding site" evidence="1">
    <location>
        <position position="241"/>
    </location>
    <ligand>
        <name>ssDNA</name>
        <dbReference type="ChEBI" id="CHEBI:9160"/>
    </ligand>
</feature>
<feature type="binding site" evidence="1">
    <location>
        <position position="247"/>
    </location>
    <ligand>
        <name>dsDNA</name>
        <dbReference type="ChEBI" id="CHEBI:4705"/>
    </ligand>
</feature>
<feature type="binding site" evidence="1">
    <location>
        <position position="247"/>
    </location>
    <ligand>
        <name>ssDNA</name>
        <dbReference type="ChEBI" id="CHEBI:9160"/>
    </ligand>
</feature>
<feature type="binding site" evidence="1">
    <location>
        <position position="315"/>
    </location>
    <ligand>
        <name>ssDNA</name>
        <dbReference type="ChEBI" id="CHEBI:9160"/>
    </ligand>
</feature>
<feature type="sequence conflict" description="In Ref. 2; AAM76791." evidence="12" ref="2">
    <original>K</original>
    <variation>E</variation>
    <location>
        <position position="117"/>
    </location>
</feature>
<organism>
    <name type="scientific">Oryza sativa subsp. japonica</name>
    <name type="common">Rice</name>
    <dbReference type="NCBI Taxonomy" id="39947"/>
    <lineage>
        <taxon>Eukaryota</taxon>
        <taxon>Viridiplantae</taxon>
        <taxon>Streptophyta</taxon>
        <taxon>Embryophyta</taxon>
        <taxon>Tracheophyta</taxon>
        <taxon>Spermatophyta</taxon>
        <taxon>Magnoliopsida</taxon>
        <taxon>Liliopsida</taxon>
        <taxon>Poales</taxon>
        <taxon>Poaceae</taxon>
        <taxon>BOP clade</taxon>
        <taxon>Oryzoideae</taxon>
        <taxon>Oryzeae</taxon>
        <taxon>Oryzinae</taxon>
        <taxon>Oryza</taxon>
        <taxon>Oryza sativa</taxon>
    </lineage>
</organism>
<keyword id="KW-0067">ATP-binding</keyword>
<keyword id="KW-0131">Cell cycle</keyword>
<keyword id="KW-0238">DNA-binding</keyword>
<keyword id="KW-0469">Meiosis</keyword>
<keyword id="KW-0547">Nucleotide-binding</keyword>
<keyword id="KW-0539">Nucleus</keyword>
<keyword id="KW-1185">Reference proteome</keyword>
<dbReference type="EMBL" id="AB065111">
    <property type="protein sequence ID" value="BAB62026.1"/>
    <property type="molecule type" value="Genomic_DNA"/>
</dbReference>
<dbReference type="EMBL" id="AY123338">
    <property type="protein sequence ID" value="AAM76791.1"/>
    <property type="molecule type" value="Genomic_DNA"/>
</dbReference>
<dbReference type="EMBL" id="AB079873">
    <property type="protein sequence ID" value="BAB85213.1"/>
    <property type="molecule type" value="mRNA"/>
</dbReference>
<dbReference type="EMBL" id="DP000011">
    <property type="protein sequence ID" value="ABA96458.1"/>
    <property type="status" value="ALT_SEQ"/>
    <property type="molecule type" value="Genomic_DNA"/>
</dbReference>
<dbReference type="EMBL" id="AP008218">
    <property type="protein sequence ID" value="BAF29157.1"/>
    <property type="molecule type" value="Genomic_DNA"/>
</dbReference>
<dbReference type="EMBL" id="AP014968">
    <property type="protein sequence ID" value="BAT15865.1"/>
    <property type="molecule type" value="Genomic_DNA"/>
</dbReference>
<dbReference type="EMBL" id="AK110641">
    <property type="protein sequence ID" value="BAG99006.1"/>
    <property type="molecule type" value="mRNA"/>
</dbReference>
<dbReference type="RefSeq" id="XP_015618986.1">
    <property type="nucleotide sequence ID" value="XM_015763500.1"/>
</dbReference>
<dbReference type="SMR" id="Q7GBF8"/>
<dbReference type="FunCoup" id="Q7GBF8">
    <property type="interactions" value="74"/>
</dbReference>
<dbReference type="STRING" id="39947.Q7GBF8"/>
<dbReference type="PaxDb" id="39947-Q7GBF8"/>
<dbReference type="EnsemblPlants" id="Os12t0143800-01">
    <property type="protein sequence ID" value="Os12t0143800-01"/>
    <property type="gene ID" value="Os12g0143800"/>
</dbReference>
<dbReference type="Gramene" id="Os12t0143800-01">
    <property type="protein sequence ID" value="Os12t0143800-01"/>
    <property type="gene ID" value="Os12g0143800"/>
</dbReference>
<dbReference type="KEGG" id="dosa:Os12g0143800"/>
<dbReference type="eggNOG" id="KOG1434">
    <property type="taxonomic scope" value="Eukaryota"/>
</dbReference>
<dbReference type="HOGENOM" id="CLU_041732_0_1_1"/>
<dbReference type="InParanoid" id="Q7GBF8"/>
<dbReference type="OMA" id="QQIECIT"/>
<dbReference type="OrthoDB" id="10251254at2759"/>
<dbReference type="Proteomes" id="UP000000763">
    <property type="component" value="Chromosome 12"/>
</dbReference>
<dbReference type="Proteomes" id="UP000059680">
    <property type="component" value="Chromosome 12"/>
</dbReference>
<dbReference type="GO" id="GO:0000794">
    <property type="term" value="C:condensed nuclear chromosome"/>
    <property type="evidence" value="ECO:0000318"/>
    <property type="project" value="GO_Central"/>
</dbReference>
<dbReference type="GO" id="GO:0005634">
    <property type="term" value="C:nucleus"/>
    <property type="evidence" value="ECO:0000314"/>
    <property type="project" value="UniProtKB"/>
</dbReference>
<dbReference type="GO" id="GO:0005524">
    <property type="term" value="F:ATP binding"/>
    <property type="evidence" value="ECO:0007669"/>
    <property type="project" value="UniProtKB-KW"/>
</dbReference>
<dbReference type="GO" id="GO:0008094">
    <property type="term" value="F:ATP-dependent activity, acting on DNA"/>
    <property type="evidence" value="ECO:0000318"/>
    <property type="project" value="GO_Central"/>
</dbReference>
<dbReference type="GO" id="GO:0140664">
    <property type="term" value="F:ATP-dependent DNA damage sensor activity"/>
    <property type="evidence" value="ECO:0007669"/>
    <property type="project" value="InterPro"/>
</dbReference>
<dbReference type="GO" id="GO:0000150">
    <property type="term" value="F:DNA strand exchange activity"/>
    <property type="evidence" value="ECO:0000318"/>
    <property type="project" value="GO_Central"/>
</dbReference>
<dbReference type="GO" id="GO:0003690">
    <property type="term" value="F:double-stranded DNA binding"/>
    <property type="evidence" value="ECO:0000314"/>
    <property type="project" value="UniProtKB"/>
</dbReference>
<dbReference type="GO" id="GO:0003697">
    <property type="term" value="F:single-stranded DNA binding"/>
    <property type="evidence" value="ECO:0000314"/>
    <property type="project" value="UniProtKB"/>
</dbReference>
<dbReference type="GO" id="GO:0017116">
    <property type="term" value="F:single-stranded DNA helicase activity"/>
    <property type="evidence" value="ECO:0000314"/>
    <property type="project" value="UniProtKB"/>
</dbReference>
<dbReference type="GO" id="GO:0070192">
    <property type="term" value="P:chromosome organization involved in meiotic cell cycle"/>
    <property type="evidence" value="ECO:0000318"/>
    <property type="project" value="GO_Central"/>
</dbReference>
<dbReference type="GO" id="GO:0000730">
    <property type="term" value="P:DNA recombinase assembly"/>
    <property type="evidence" value="ECO:0000318"/>
    <property type="project" value="GO_Central"/>
</dbReference>
<dbReference type="GO" id="GO:0042148">
    <property type="term" value="P:DNA strand invasion"/>
    <property type="evidence" value="ECO:0000318"/>
    <property type="project" value="GO_Central"/>
</dbReference>
<dbReference type="GO" id="GO:0006312">
    <property type="term" value="P:mitotic recombination"/>
    <property type="evidence" value="ECO:0000318"/>
    <property type="project" value="GO_Central"/>
</dbReference>
<dbReference type="GO" id="GO:0007131">
    <property type="term" value="P:reciprocal meiotic recombination"/>
    <property type="evidence" value="ECO:0000315"/>
    <property type="project" value="UniProtKB"/>
</dbReference>
<dbReference type="GO" id="GO:0007130">
    <property type="term" value="P:synaptonemal complex assembly"/>
    <property type="evidence" value="ECO:0000315"/>
    <property type="project" value="UniProtKB"/>
</dbReference>
<dbReference type="CDD" id="cd19514">
    <property type="entry name" value="DMC1"/>
    <property type="match status" value="1"/>
</dbReference>
<dbReference type="FunFam" id="3.40.50.300:FF:000239">
    <property type="entry name" value="Meiotic recombination protein DMC1"/>
    <property type="match status" value="1"/>
</dbReference>
<dbReference type="FunFam" id="1.10.150.20:FF:000043">
    <property type="entry name" value="Meiotic recombination protein DMC1 homolog"/>
    <property type="match status" value="1"/>
</dbReference>
<dbReference type="Gene3D" id="1.10.150.20">
    <property type="entry name" value="5' to 3' exonuclease, C-terminal subdomain"/>
    <property type="match status" value="1"/>
</dbReference>
<dbReference type="Gene3D" id="3.40.50.300">
    <property type="entry name" value="P-loop containing nucleotide triphosphate hydrolases"/>
    <property type="match status" value="1"/>
</dbReference>
<dbReference type="InterPro" id="IPR011940">
    <property type="entry name" value="Dmc1"/>
</dbReference>
<dbReference type="InterPro" id="IPR013632">
    <property type="entry name" value="DNA_recomb/repair_Rad51_C"/>
</dbReference>
<dbReference type="InterPro" id="IPR016467">
    <property type="entry name" value="DNA_recomb/repair_RecA-like"/>
</dbReference>
<dbReference type="InterPro" id="IPR010995">
    <property type="entry name" value="DNA_repair_Rad51/TF_NusA_a-hlx"/>
</dbReference>
<dbReference type="InterPro" id="IPR027417">
    <property type="entry name" value="P-loop_NTPase"/>
</dbReference>
<dbReference type="InterPro" id="IPR020588">
    <property type="entry name" value="RecA_ATP-bd"/>
</dbReference>
<dbReference type="InterPro" id="IPR020587">
    <property type="entry name" value="RecA_monomer-monomer_interface"/>
</dbReference>
<dbReference type="NCBIfam" id="NF003301">
    <property type="entry name" value="PRK04301.1"/>
    <property type="match status" value="1"/>
</dbReference>
<dbReference type="NCBIfam" id="TIGR02238">
    <property type="entry name" value="recomb_DMC1"/>
    <property type="match status" value="1"/>
</dbReference>
<dbReference type="PANTHER" id="PTHR22942:SF30">
    <property type="entry name" value="MEIOTIC RECOMBINATION PROTEIN DMC1_LIM15 HOMOLOG"/>
    <property type="match status" value="1"/>
</dbReference>
<dbReference type="PANTHER" id="PTHR22942">
    <property type="entry name" value="RECA/RAD51/RADA DNA STRAND-PAIRING FAMILY MEMBER"/>
    <property type="match status" value="1"/>
</dbReference>
<dbReference type="Pfam" id="PF08423">
    <property type="entry name" value="Rad51"/>
    <property type="match status" value="1"/>
</dbReference>
<dbReference type="PIRSF" id="PIRSF005856">
    <property type="entry name" value="Rad51"/>
    <property type="match status" value="1"/>
</dbReference>
<dbReference type="SUPFAM" id="SSF52540">
    <property type="entry name" value="P-loop containing nucleoside triphosphate hydrolases"/>
    <property type="match status" value="1"/>
</dbReference>
<dbReference type="SUPFAM" id="SSF47794">
    <property type="entry name" value="Rad51 N-terminal domain-like"/>
    <property type="match status" value="1"/>
</dbReference>
<dbReference type="PROSITE" id="PS50162">
    <property type="entry name" value="RECA_2"/>
    <property type="match status" value="1"/>
</dbReference>
<dbReference type="PROSITE" id="PS50163">
    <property type="entry name" value="RECA_3"/>
    <property type="match status" value="1"/>
</dbReference>
<reference key="1">
    <citation type="journal article" date="2001" name="Theor. Appl. Genet.">
        <title>Characterization of a DMC1 homologue, RiLIM15, in meiotic panicles, mitotic cultured cells and mature leaves of rice (Oryza sativa L.).</title>
        <authorList>
            <person name="Shimazu J."/>
            <person name="Matsukura C."/>
            <person name="Senda M."/>
            <person name="Ishikawa R."/>
            <person name="Akada S."/>
            <person name="Harada T."/>
            <person name="Tabata S."/>
            <person name="Niizeki M."/>
        </authorList>
        <dbReference type="AGRICOLA" id="IND23222213"/>
    </citation>
    <scope>NUCLEOTIDE SEQUENCE [GENOMIC DNA]</scope>
    <scope>TISSUE SPECIFICITY</scope>
</reference>
<reference key="2">
    <citation type="journal article" date="2005" name="Plant Mol. Biol.">
        <title>DNA binding and pairing activity of OsDmc1, a recombinase from rice.</title>
        <authorList>
            <person name="Kant C.R."/>
            <person name="Rao B.J."/>
            <person name="Sainis J.K."/>
        </authorList>
    </citation>
    <scope>NUCLEOTIDE SEQUENCE [GENOMIC DNA]</scope>
    <scope>FUNCTION</scope>
</reference>
<reference key="3">
    <citation type="journal article" date="2008" name="Nucleic Acids Res.">
        <title>Filament formation and robust strand exchange activities of the rice DMC1A and DMC1B proteins.</title>
        <authorList>
            <person name="Sakane I."/>
            <person name="Kamataki C."/>
            <person name="Takizawa Y."/>
            <person name="Nakashima M."/>
            <person name="Toki S."/>
            <person name="Ichikawa H."/>
            <person name="Ikawa S."/>
            <person name="Shibata T."/>
            <person name="Kurumizaka H."/>
        </authorList>
    </citation>
    <scope>NUCLEOTIDE SEQUENCE [MRNA]</scope>
    <scope>FUNCTION</scope>
    <source>
        <strain>cv. Nipponbare</strain>
    </source>
</reference>
<reference key="4">
    <citation type="journal article" date="2005" name="BMC Biol.">
        <title>The sequence of rice chromosomes 11 and 12, rich in disease resistance genes and recent gene duplications.</title>
        <authorList>
            <consortium name="The rice chromosomes 11 and 12 sequencing consortia"/>
        </authorList>
    </citation>
    <scope>NUCLEOTIDE SEQUENCE [LARGE SCALE GENOMIC DNA]</scope>
    <source>
        <strain>cv. Nipponbare</strain>
    </source>
</reference>
<reference key="5">
    <citation type="journal article" date="2005" name="Nature">
        <title>The map-based sequence of the rice genome.</title>
        <authorList>
            <consortium name="International rice genome sequencing project (IRGSP)"/>
        </authorList>
    </citation>
    <scope>NUCLEOTIDE SEQUENCE [LARGE SCALE GENOMIC DNA]</scope>
    <source>
        <strain>cv. Nipponbare</strain>
    </source>
</reference>
<reference key="6">
    <citation type="journal article" date="2008" name="Nucleic Acids Res.">
        <title>The rice annotation project database (RAP-DB): 2008 update.</title>
        <authorList>
            <consortium name="The rice annotation project (RAP)"/>
        </authorList>
    </citation>
    <scope>GENOME REANNOTATION</scope>
    <source>
        <strain>cv. Nipponbare</strain>
    </source>
</reference>
<reference key="7">
    <citation type="journal article" date="2013" name="Rice">
        <title>Improvement of the Oryza sativa Nipponbare reference genome using next generation sequence and optical map data.</title>
        <authorList>
            <person name="Kawahara Y."/>
            <person name="de la Bastide M."/>
            <person name="Hamilton J.P."/>
            <person name="Kanamori H."/>
            <person name="McCombie W.R."/>
            <person name="Ouyang S."/>
            <person name="Schwartz D.C."/>
            <person name="Tanaka T."/>
            <person name="Wu J."/>
            <person name="Zhou S."/>
            <person name="Childs K.L."/>
            <person name="Davidson R.M."/>
            <person name="Lin H."/>
            <person name="Quesada-Ocampo L."/>
            <person name="Vaillancourt B."/>
            <person name="Sakai H."/>
            <person name="Lee S.S."/>
            <person name="Kim J."/>
            <person name="Numa H."/>
            <person name="Itoh T."/>
            <person name="Buell C.R."/>
            <person name="Matsumoto T."/>
        </authorList>
    </citation>
    <scope>GENOME REANNOTATION</scope>
    <source>
        <strain>cv. Nipponbare</strain>
    </source>
</reference>
<reference key="8">
    <citation type="journal article" date="2003" name="Science">
        <title>Collection, mapping, and annotation of over 28,000 cDNA clones from japonica rice.</title>
        <authorList>
            <consortium name="The rice full-length cDNA consortium"/>
        </authorList>
    </citation>
    <scope>NUCLEOTIDE SEQUENCE [LARGE SCALE MRNA]</scope>
    <source>
        <strain>cv. Nipponbare</strain>
    </source>
</reference>
<reference key="9">
    <citation type="journal article" date="2006" name="FEBS J.">
        <title>DNA strand exchange activity of rice recombinase OsDmc1 monitored by fluorescence resonance energy transfer and the role of ATP hydrolysis.</title>
        <authorList>
            <person name="Rajanikant C."/>
            <person name="Kumbhakar M."/>
            <person name="Pal H."/>
            <person name="Rao B.J."/>
            <person name="Sainis J.K."/>
        </authorList>
    </citation>
    <scope>FUNCTION</scope>
</reference>
<reference key="10">
    <citation type="journal article" date="2007" name="Plant Mol. Biol.">
        <title>OsDMC1 is required for homologous pairing in Oryza sativa.</title>
        <authorList>
            <person name="Deng Z.Y."/>
            <person name="Wang T."/>
        </authorList>
    </citation>
    <scope>FUNCTION</scope>
</reference>
<reference key="11">
    <citation type="journal article" date="2015" name="Indian J. Biochem. Biophys.">
        <title>Comparison of activity of OsDmc1A recombinase of rice (Oryza sativa) in presence of Ca2+ and Mg2+ ions.</title>
        <authorList>
            <person name="Chittela R.K."/>
            <person name="Melzer M."/>
            <person name="Sainis J.K."/>
        </authorList>
    </citation>
    <scope>FUNCTION</scope>
</reference>
<reference key="12">
    <citation type="journal article" date="2016" name="Plant Physiol.">
        <title>OsDMC1 is not required for homologous pairing in rice meiosis.</title>
        <authorList>
            <person name="Wang H."/>
            <person name="Hu Q."/>
            <person name="Tang D."/>
            <person name="Liu X."/>
            <person name="Du G."/>
            <person name="Shen Y."/>
            <person name="Li Y."/>
            <person name="Cheng Z."/>
        </authorList>
    </citation>
    <scope>FUNCTION</scope>
    <scope>SUBCELLULAR LOCATION</scope>
</reference>
<accession>Q7GBF8</accession>
<accession>Q2QXT3</accession>
<accession>Q8L810</accession>
<accession>Q94IB0</accession>
<protein>
    <recommendedName>
        <fullName evidence="12">Meiotic recombination protein DMC1 homolog A</fullName>
        <shortName evidence="10">OsDMC1A</shortName>
    </recommendedName>
    <alternativeName>
        <fullName evidence="10">OsDMC1</fullName>
    </alternativeName>
    <alternativeName>
        <fullName evidence="11">RiLIM15A</fullName>
    </alternativeName>
</protein>
<gene>
    <name evidence="10" type="primary">DMC1A</name>
    <name evidence="10" type="synonym">DMC1</name>
    <name evidence="15" type="ordered locus">Os12g0143800</name>
    <name evidence="14" type="ordered locus">LOC_Os12g04980</name>
</gene>
<name>DMC1A_ORYSJ</name>
<sequence length="344" mass="37542">MAPSKQYSEGGQLQLMDAERIEEEEECFESIDKLISQGINSGDVKKLQDAGIYTCNGLMMHTKKSLTGIKGLSEAKVDKICEAAEKLLSQGFITGSDLLIKRKSVVRITTGSQALDKLLGGGIETLCITEAFGEFRSGKTQLAHTLCVSAQLPIHMHGGNGKVAYIDTEGTFRPERIVPIAERFGMDANAVLDNIIYARAYTYEHQYNLLLGLAAKMAEEPFRLLIVDSVIALFRVDFSGRGELAERQQKLAQMLSRLTKIAEEFNVAVYITNQVIADPGGGMFITDLKKPAGGHVLAHAATIRLMLRKGKGEQRVCKIFDAPNLPEGEAVFQVTSGGIMDAKD</sequence>
<evidence type="ECO:0000250" key="1">
    <source>
        <dbReference type="UniProtKB" id="Q14565"/>
    </source>
</evidence>
<evidence type="ECO:0000255" key="2"/>
<evidence type="ECO:0000269" key="3">
    <source>
    </source>
</evidence>
<evidence type="ECO:0000269" key="4">
    <source>
    </source>
</evidence>
<evidence type="ECO:0000269" key="5">
    <source>
    </source>
</evidence>
<evidence type="ECO:0000269" key="6">
    <source>
    </source>
</evidence>
<evidence type="ECO:0000269" key="7">
    <source>
    </source>
</evidence>
<evidence type="ECO:0000269" key="8">
    <source>
    </source>
</evidence>
<evidence type="ECO:0000269" key="9">
    <source ref="1"/>
</evidence>
<evidence type="ECO:0000303" key="10">
    <source>
    </source>
</evidence>
<evidence type="ECO:0000303" key="11">
    <source ref="1"/>
</evidence>
<evidence type="ECO:0000305" key="12"/>
<evidence type="ECO:0000305" key="13">
    <source>
    </source>
</evidence>
<evidence type="ECO:0000312" key="14">
    <source>
        <dbReference type="EMBL" id="ABA96458.1"/>
    </source>
</evidence>
<evidence type="ECO:0000312" key="15">
    <source>
        <dbReference type="EMBL" id="BAF29157.1"/>
    </source>
</evidence>
<comment type="function">
    <text evidence="3 4 5 6 7 8 13">Recombinase that may participate in meiotic recombination, specifically in homologous strand assimilation, which is required for the resolution of meiotic double-strand breaks (Probable). Exhibits DNA-dependent ATPase activity when bound to single-stranded DNA (ssDNA). Mediates renaturation of homologous complementary strands as well as assimilation of single strands into homologous supercoiled duplexes leading to D-loop formation (PubMed:15821864). Binds circular single-stranded DNA (ssDNA) and circular double-stranded DNA (dsDNA) in vitro (PubMed:15821864, PubMed:26118128). Catalyzes DNA homologous renaturation and DNA strand exchange. The rates of these activities are dependent on the state of ATP hydrolysis (PubMed:16689935, PubMed:26118128). Forms helical filaments along ssDNA and dsDNA, and promotes strand exchange between ssDNA and dsDNA with long DNA substrates of several thousand base pairs. The presence of the replication protein A is not required for this activity (PubMed:18583359). Seems to be required for homologous pairing and subsequent chromosome segregation during male meiosis (PubMed:17562186). May be not directly required for homologous pairing during male meiosis. Required for synaptonemal complex assembly and crossover formation. Functions redundantly with DMC1B (PubMed:26960731).</text>
</comment>
<comment type="subcellular location">
    <subcellularLocation>
        <location evidence="8">Nucleus</location>
    </subcellularLocation>
</comment>
<comment type="tissue specificity">
    <text evidence="9">Expressed in meiotic young panicles.</text>
</comment>
<comment type="miscellaneous">
    <text evidence="5">Plant silencing DMC1A are sterile due to defects in homologous pairing and subsequent chromosome segregation during male meiosis.</text>
</comment>
<comment type="similarity">
    <text evidence="12">Belongs to the RecA family. DMC1 subfamily.</text>
</comment>
<comment type="sequence caution" evidence="12">
    <conflict type="erroneous gene model prediction">
        <sequence resource="EMBL-CDS" id="ABA96458"/>
    </conflict>
</comment>
<proteinExistence type="evidence at transcript level"/>